<keyword id="KW-0249">Electron transport</keyword>
<keyword id="KW-0349">Heme</keyword>
<keyword id="KW-0408">Iron</keyword>
<keyword id="KW-0479">Metal-binding</keyword>
<keyword id="KW-0496">Mitochondrion</keyword>
<keyword id="KW-1185">Reference proteome</keyword>
<keyword id="KW-0679">Respiratory chain</keyword>
<keyword id="KW-0813">Transport</keyword>
<sequence length="105" mass="11575">MSGDIAKGKKAFVQKCAQCHTVEQGGKHKTGPNLWGLFGRKTGQAEGFSYTDANKSKGIIWSEETLMVYLENPKKYIPGTKMIFAGIKKKTERADLIAYLKSSTS</sequence>
<gene>
    <name type="primary">cyc-B</name>
</gene>
<protein>
    <recommendedName>
        <fullName>Cytochrome c-b</fullName>
    </recommendedName>
</protein>
<proteinExistence type="inferred from homology"/>
<reference key="1">
    <citation type="journal article" date="2006" name="Proc. Natl. Acad. Sci. U.S.A.">
        <title>Highly conserved syntenic blocks at the vertebrate Hox loci and conserved regulatory elements within and outside Hox gene clusters.</title>
        <authorList>
            <person name="Lee A.P."/>
            <person name="Koh E.G.L."/>
            <person name="Tay A."/>
            <person name="Brenner S."/>
            <person name="Venkatesh B."/>
        </authorList>
    </citation>
    <scope>NUCLEOTIDE SEQUENCE [GENOMIC DNA]</scope>
</reference>
<evidence type="ECO:0000250" key="1"/>
<evidence type="ECO:0000255" key="2">
    <source>
        <dbReference type="PROSITE-ProRule" id="PRU00433"/>
    </source>
</evidence>
<evidence type="ECO:0000305" key="3"/>
<organism>
    <name type="scientific">Takifugu rubripes</name>
    <name type="common">Japanese pufferfish</name>
    <name type="synonym">Fugu rubripes</name>
    <dbReference type="NCBI Taxonomy" id="31033"/>
    <lineage>
        <taxon>Eukaryota</taxon>
        <taxon>Metazoa</taxon>
        <taxon>Chordata</taxon>
        <taxon>Craniata</taxon>
        <taxon>Vertebrata</taxon>
        <taxon>Euteleostomi</taxon>
        <taxon>Actinopterygii</taxon>
        <taxon>Neopterygii</taxon>
        <taxon>Teleostei</taxon>
        <taxon>Neoteleostei</taxon>
        <taxon>Acanthomorphata</taxon>
        <taxon>Eupercaria</taxon>
        <taxon>Tetraodontiformes</taxon>
        <taxon>Tetradontoidea</taxon>
        <taxon>Tetraodontidae</taxon>
        <taxon>Takifugu</taxon>
    </lineage>
</organism>
<name>CYCB_TAKRU</name>
<accession>Q1KKS2</accession>
<comment type="function">
    <text evidence="1">Electron carrier protein. The oxidized form of the cytochrome c heme group can accept an electron from the heme group of the cytochrome c1 subunit of cytochrome reductase. Cytochrome c then transfers this electron to the cytochrome oxidase complex, the final protein carrier in the mitochondrial electron-transport chain (By similarity).</text>
</comment>
<comment type="subcellular location">
    <subcellularLocation>
        <location evidence="1">Mitochondrion intermembrane space</location>
    </subcellularLocation>
    <text evidence="1">Loosely associated with the inner membrane.</text>
</comment>
<comment type="PTM">
    <text evidence="1">Binds 1 heme c group covalently per subunit.</text>
</comment>
<comment type="similarity">
    <text evidence="3">Belongs to the cytochrome c family.</text>
</comment>
<comment type="online information" name="Protein Spotlight">
    <link uri="https://www.proteinspotlight.org/back_issues/076"/>
    <text>Life shuttle - Issue 76 of November 2006</text>
</comment>
<feature type="chain" id="PRO_0000266004" description="Cytochrome c-b">
    <location>
        <begin position="1"/>
        <end position="105"/>
    </location>
</feature>
<feature type="binding site" description="covalent" evidence="2">
    <location>
        <position position="16"/>
    </location>
    <ligand>
        <name>heme c</name>
        <dbReference type="ChEBI" id="CHEBI:61717"/>
    </ligand>
</feature>
<feature type="binding site" description="covalent" evidence="2">
    <location>
        <position position="19"/>
    </location>
    <ligand>
        <name>heme c</name>
        <dbReference type="ChEBI" id="CHEBI:61717"/>
    </ligand>
</feature>
<feature type="binding site" description="axial binding residue" evidence="2">
    <location>
        <position position="20"/>
    </location>
    <ligand>
        <name>heme c</name>
        <dbReference type="ChEBI" id="CHEBI:61717"/>
    </ligand>
    <ligandPart>
        <name>Fe</name>
        <dbReference type="ChEBI" id="CHEBI:18248"/>
    </ligandPart>
</feature>
<feature type="binding site" description="axial binding residue" evidence="2">
    <location>
        <position position="82"/>
    </location>
    <ligand>
        <name>heme c</name>
        <dbReference type="ChEBI" id="CHEBI:61717"/>
    </ligand>
    <ligandPart>
        <name>Fe</name>
        <dbReference type="ChEBI" id="CHEBI:18248"/>
    </ligandPart>
</feature>
<dbReference type="EMBL" id="DQ481668">
    <property type="protein sequence ID" value="ABF22472.1"/>
    <property type="molecule type" value="Genomic_DNA"/>
</dbReference>
<dbReference type="SMR" id="Q1KKS2"/>
<dbReference type="STRING" id="31033.ENSTRUP00000066781"/>
<dbReference type="Ensembl" id="ENSTRUT00000066643.1">
    <property type="protein sequence ID" value="ENSTRUP00000066781.1"/>
    <property type="gene ID" value="ENSTRUG00000032049.1"/>
</dbReference>
<dbReference type="GeneID" id="101064386"/>
<dbReference type="KEGG" id="tru:101064386"/>
<dbReference type="eggNOG" id="KOG3453">
    <property type="taxonomic scope" value="Eukaryota"/>
</dbReference>
<dbReference type="GeneTree" id="ENSGT00940000157883"/>
<dbReference type="HOGENOM" id="CLU_060944_3_0_1"/>
<dbReference type="InParanoid" id="Q1KKS2"/>
<dbReference type="OMA" id="ARCKACH"/>
<dbReference type="OrthoDB" id="449280at2759"/>
<dbReference type="TreeFam" id="TF300226"/>
<dbReference type="Proteomes" id="UP000005226">
    <property type="component" value="Chromosome 1"/>
</dbReference>
<dbReference type="GO" id="GO:0005758">
    <property type="term" value="C:mitochondrial intermembrane space"/>
    <property type="evidence" value="ECO:0007669"/>
    <property type="project" value="UniProtKB-SubCell"/>
</dbReference>
<dbReference type="GO" id="GO:0009055">
    <property type="term" value="F:electron transfer activity"/>
    <property type="evidence" value="ECO:0007669"/>
    <property type="project" value="InterPro"/>
</dbReference>
<dbReference type="GO" id="GO:0020037">
    <property type="term" value="F:heme binding"/>
    <property type="evidence" value="ECO:0007669"/>
    <property type="project" value="InterPro"/>
</dbReference>
<dbReference type="GO" id="GO:0046872">
    <property type="term" value="F:metal ion binding"/>
    <property type="evidence" value="ECO:0007669"/>
    <property type="project" value="UniProtKB-KW"/>
</dbReference>
<dbReference type="FunFam" id="1.10.760.10:FF:000001">
    <property type="entry name" value="Cytochrome c iso-1"/>
    <property type="match status" value="1"/>
</dbReference>
<dbReference type="Gene3D" id="1.10.760.10">
    <property type="entry name" value="Cytochrome c-like domain"/>
    <property type="match status" value="1"/>
</dbReference>
<dbReference type="InterPro" id="IPR009056">
    <property type="entry name" value="Cyt_c-like_dom"/>
</dbReference>
<dbReference type="InterPro" id="IPR036909">
    <property type="entry name" value="Cyt_c-like_dom_sf"/>
</dbReference>
<dbReference type="InterPro" id="IPR002327">
    <property type="entry name" value="Cyt_c_1A/1B"/>
</dbReference>
<dbReference type="PANTHER" id="PTHR11961">
    <property type="entry name" value="CYTOCHROME C"/>
    <property type="match status" value="1"/>
</dbReference>
<dbReference type="Pfam" id="PF00034">
    <property type="entry name" value="Cytochrom_C"/>
    <property type="match status" value="1"/>
</dbReference>
<dbReference type="PRINTS" id="PR00604">
    <property type="entry name" value="CYTCHRMECIAB"/>
</dbReference>
<dbReference type="SUPFAM" id="SSF46626">
    <property type="entry name" value="Cytochrome c"/>
    <property type="match status" value="1"/>
</dbReference>
<dbReference type="PROSITE" id="PS51007">
    <property type="entry name" value="CYTC"/>
    <property type="match status" value="1"/>
</dbReference>